<comment type="function">
    <text>Metallothioneins have a high content of cysteine residues that bind various heavy metals.</text>
</comment>
<comment type="similarity">
    <text evidence="1">Belongs to the metallothionein superfamily. Type 15 family.</text>
</comment>
<reference key="1">
    <citation type="journal article" date="1991" name="FEBS Lett.">
        <title>A metallothionein-like gene from maize (Zea mays). Cloning and characterization.</title>
        <authorList>
            <person name="de Framond A.J."/>
        </authorList>
    </citation>
    <scope>NUCLEOTIDE SEQUENCE [GENOMIC DNA]</scope>
</reference>
<reference key="2">
    <citation type="journal article" date="1995" name="Plant Mol. Biol.">
        <title>Molecular cloning and characterization of six cDNAs expressed during glucose starvation in excised maize (Zea mays L.) root tips.</title>
        <authorList>
            <person name="Chevalier C."/>
            <person name="Bourgeois E."/>
            <person name="Pradet A."/>
            <person name="Raymond P."/>
        </authorList>
    </citation>
    <scope>NUCLEOTIDE SEQUENCE [MRNA]</scope>
    <source>
        <tissue>Root meristem</tissue>
    </source>
</reference>
<name>MT1_MAIZE</name>
<sequence>MSCSCGSSCGCGSSCKCGKKYPDLEETSTAAQPTVVLGVAPEKKAAPEFVEAAAESGEAAHGCSCGSGCKCDPCNC</sequence>
<feature type="chain" id="PRO_0000197378" description="Metallothionein-like protein 1">
    <location>
        <begin position="1"/>
        <end position="76"/>
    </location>
</feature>
<keyword id="KW-0479">Metal-binding</keyword>
<keyword id="KW-0480">Metal-thiolate cluster</keyword>
<keyword id="KW-1185">Reference proteome</keyword>
<evidence type="ECO:0000305" key="1"/>
<protein>
    <recommendedName>
        <fullName>Metallothionein-like protein 1</fullName>
        <shortName>MT-1</shortName>
    </recommendedName>
</protein>
<proteinExistence type="inferred from homology"/>
<dbReference type="EMBL" id="S57628">
    <property type="protein sequence ID" value="AAB19992.1"/>
    <property type="molecule type" value="Genomic_DNA"/>
</dbReference>
<dbReference type="EMBL" id="X82186">
    <property type="protein sequence ID" value="CAA57676.1"/>
    <property type="molecule type" value="mRNA"/>
</dbReference>
<dbReference type="PIR" id="S17560">
    <property type="entry name" value="S17560"/>
</dbReference>
<dbReference type="RefSeq" id="NP_001105465.1">
    <property type="nucleotide sequence ID" value="NM_001111995.1"/>
</dbReference>
<dbReference type="FunCoup" id="P30571">
    <property type="interactions" value="81"/>
</dbReference>
<dbReference type="STRING" id="4577.P30571"/>
<dbReference type="GeneID" id="542432"/>
<dbReference type="KEGG" id="zma:542432"/>
<dbReference type="MaizeGDB" id="64922"/>
<dbReference type="InParanoid" id="P30571"/>
<dbReference type="OrthoDB" id="678987at2759"/>
<dbReference type="Proteomes" id="UP000007305">
    <property type="component" value="Unplaced"/>
</dbReference>
<dbReference type="GO" id="GO:0046872">
    <property type="term" value="F:metal ion binding"/>
    <property type="evidence" value="ECO:0007669"/>
    <property type="project" value="UniProtKB-KW"/>
</dbReference>
<dbReference type="InterPro" id="IPR000347">
    <property type="entry name" value="Metalthion_15p"/>
</dbReference>
<dbReference type="PANTHER" id="PTHR33543:SF15">
    <property type="entry name" value="METALLOTHIONEIN-LIKE PROTEIN 1A"/>
    <property type="match status" value="1"/>
</dbReference>
<dbReference type="PANTHER" id="PTHR33543">
    <property type="entry name" value="METALLOTHIONEIN-LIKE PROTEIN 2A"/>
    <property type="match status" value="1"/>
</dbReference>
<dbReference type="Pfam" id="PF01439">
    <property type="entry name" value="Metallothio_2"/>
    <property type="match status" value="1"/>
</dbReference>
<accession>P30571</accession>
<organism>
    <name type="scientific">Zea mays</name>
    <name type="common">Maize</name>
    <dbReference type="NCBI Taxonomy" id="4577"/>
    <lineage>
        <taxon>Eukaryota</taxon>
        <taxon>Viridiplantae</taxon>
        <taxon>Streptophyta</taxon>
        <taxon>Embryophyta</taxon>
        <taxon>Tracheophyta</taxon>
        <taxon>Spermatophyta</taxon>
        <taxon>Magnoliopsida</taxon>
        <taxon>Liliopsida</taxon>
        <taxon>Poales</taxon>
        <taxon>Poaceae</taxon>
        <taxon>PACMAD clade</taxon>
        <taxon>Panicoideae</taxon>
        <taxon>Andropogonodae</taxon>
        <taxon>Andropogoneae</taxon>
        <taxon>Tripsacinae</taxon>
        <taxon>Zea</taxon>
    </lineage>
</organism>